<dbReference type="EMBL" id="BA000037">
    <property type="protein sequence ID" value="BAC95720.1"/>
    <property type="status" value="ALT_INIT"/>
    <property type="molecule type" value="Genomic_DNA"/>
</dbReference>
<dbReference type="RefSeq" id="WP_043877332.1">
    <property type="nucleotide sequence ID" value="NC_005139.1"/>
</dbReference>
<dbReference type="SMR" id="Q7MHB5"/>
<dbReference type="STRING" id="672.VV93_v1c26780"/>
<dbReference type="KEGG" id="vvy:VV2956"/>
<dbReference type="PATRIC" id="fig|196600.6.peg.2936"/>
<dbReference type="eggNOG" id="COG0178">
    <property type="taxonomic scope" value="Bacteria"/>
</dbReference>
<dbReference type="HOGENOM" id="CLU_001370_0_2_6"/>
<dbReference type="Proteomes" id="UP000002675">
    <property type="component" value="Chromosome I"/>
</dbReference>
<dbReference type="GO" id="GO:0005737">
    <property type="term" value="C:cytoplasm"/>
    <property type="evidence" value="ECO:0007669"/>
    <property type="project" value="UniProtKB-SubCell"/>
</dbReference>
<dbReference type="GO" id="GO:0009380">
    <property type="term" value="C:excinuclease repair complex"/>
    <property type="evidence" value="ECO:0007669"/>
    <property type="project" value="InterPro"/>
</dbReference>
<dbReference type="GO" id="GO:0005524">
    <property type="term" value="F:ATP binding"/>
    <property type="evidence" value="ECO:0007669"/>
    <property type="project" value="UniProtKB-UniRule"/>
</dbReference>
<dbReference type="GO" id="GO:0016887">
    <property type="term" value="F:ATP hydrolysis activity"/>
    <property type="evidence" value="ECO:0007669"/>
    <property type="project" value="InterPro"/>
</dbReference>
<dbReference type="GO" id="GO:0003677">
    <property type="term" value="F:DNA binding"/>
    <property type="evidence" value="ECO:0007669"/>
    <property type="project" value="UniProtKB-UniRule"/>
</dbReference>
<dbReference type="GO" id="GO:0009381">
    <property type="term" value="F:excinuclease ABC activity"/>
    <property type="evidence" value="ECO:0007669"/>
    <property type="project" value="UniProtKB-UniRule"/>
</dbReference>
<dbReference type="GO" id="GO:0008270">
    <property type="term" value="F:zinc ion binding"/>
    <property type="evidence" value="ECO:0007669"/>
    <property type="project" value="UniProtKB-UniRule"/>
</dbReference>
<dbReference type="GO" id="GO:0006289">
    <property type="term" value="P:nucleotide-excision repair"/>
    <property type="evidence" value="ECO:0007669"/>
    <property type="project" value="UniProtKB-UniRule"/>
</dbReference>
<dbReference type="GO" id="GO:0009432">
    <property type="term" value="P:SOS response"/>
    <property type="evidence" value="ECO:0007669"/>
    <property type="project" value="UniProtKB-UniRule"/>
</dbReference>
<dbReference type="CDD" id="cd03270">
    <property type="entry name" value="ABC_UvrA_I"/>
    <property type="match status" value="1"/>
</dbReference>
<dbReference type="CDD" id="cd03271">
    <property type="entry name" value="ABC_UvrA_II"/>
    <property type="match status" value="1"/>
</dbReference>
<dbReference type="FunFam" id="1.10.8.280:FF:000001">
    <property type="entry name" value="UvrABC system protein A"/>
    <property type="match status" value="1"/>
</dbReference>
<dbReference type="FunFam" id="1.20.1580.10:FF:000002">
    <property type="entry name" value="UvrABC system protein A"/>
    <property type="match status" value="1"/>
</dbReference>
<dbReference type="FunFam" id="1.20.1580.10:FF:000003">
    <property type="entry name" value="UvrABC system protein A"/>
    <property type="match status" value="1"/>
</dbReference>
<dbReference type="Gene3D" id="1.10.8.280">
    <property type="entry name" value="ABC transporter ATPase domain-like"/>
    <property type="match status" value="1"/>
</dbReference>
<dbReference type="Gene3D" id="1.20.1580.10">
    <property type="entry name" value="ABC transporter ATPase like domain"/>
    <property type="match status" value="2"/>
</dbReference>
<dbReference type="Gene3D" id="3.30.1490.20">
    <property type="entry name" value="ATP-grasp fold, A domain"/>
    <property type="match status" value="1"/>
</dbReference>
<dbReference type="Gene3D" id="3.40.50.300">
    <property type="entry name" value="P-loop containing nucleotide triphosphate hydrolases"/>
    <property type="match status" value="2"/>
</dbReference>
<dbReference type="HAMAP" id="MF_00205">
    <property type="entry name" value="UvrA"/>
    <property type="match status" value="1"/>
</dbReference>
<dbReference type="InterPro" id="IPR003439">
    <property type="entry name" value="ABC_transporter-like_ATP-bd"/>
</dbReference>
<dbReference type="InterPro" id="IPR017871">
    <property type="entry name" value="ABC_transporter-like_CS"/>
</dbReference>
<dbReference type="InterPro" id="IPR013815">
    <property type="entry name" value="ATP_grasp_subdomain_1"/>
</dbReference>
<dbReference type="InterPro" id="IPR027417">
    <property type="entry name" value="P-loop_NTPase"/>
</dbReference>
<dbReference type="InterPro" id="IPR004602">
    <property type="entry name" value="UvrA"/>
</dbReference>
<dbReference type="InterPro" id="IPR041552">
    <property type="entry name" value="UvrA_DNA-bd"/>
</dbReference>
<dbReference type="InterPro" id="IPR041102">
    <property type="entry name" value="UvrA_inter"/>
</dbReference>
<dbReference type="NCBIfam" id="NF001503">
    <property type="entry name" value="PRK00349.1"/>
    <property type="match status" value="1"/>
</dbReference>
<dbReference type="NCBIfam" id="TIGR00630">
    <property type="entry name" value="uvra"/>
    <property type="match status" value="1"/>
</dbReference>
<dbReference type="PANTHER" id="PTHR43152">
    <property type="entry name" value="UVRABC SYSTEM PROTEIN A"/>
    <property type="match status" value="1"/>
</dbReference>
<dbReference type="PANTHER" id="PTHR43152:SF3">
    <property type="entry name" value="UVRABC SYSTEM PROTEIN A"/>
    <property type="match status" value="1"/>
</dbReference>
<dbReference type="Pfam" id="PF00005">
    <property type="entry name" value="ABC_tran"/>
    <property type="match status" value="1"/>
</dbReference>
<dbReference type="Pfam" id="PF17755">
    <property type="entry name" value="UvrA_DNA-bind"/>
    <property type="match status" value="1"/>
</dbReference>
<dbReference type="Pfam" id="PF17760">
    <property type="entry name" value="UvrA_inter"/>
    <property type="match status" value="1"/>
</dbReference>
<dbReference type="SUPFAM" id="SSF52540">
    <property type="entry name" value="P-loop containing nucleoside triphosphate hydrolases"/>
    <property type="match status" value="2"/>
</dbReference>
<dbReference type="PROSITE" id="PS00211">
    <property type="entry name" value="ABC_TRANSPORTER_1"/>
    <property type="match status" value="2"/>
</dbReference>
<dbReference type="PROSITE" id="PS50893">
    <property type="entry name" value="ABC_TRANSPORTER_2"/>
    <property type="match status" value="2"/>
</dbReference>
<name>UVRA_VIBVY</name>
<keyword id="KW-0067">ATP-binding</keyword>
<keyword id="KW-0963">Cytoplasm</keyword>
<keyword id="KW-0227">DNA damage</keyword>
<keyword id="KW-0228">DNA excision</keyword>
<keyword id="KW-0234">DNA repair</keyword>
<keyword id="KW-0238">DNA-binding</keyword>
<keyword id="KW-0267">Excision nuclease</keyword>
<keyword id="KW-0479">Metal-binding</keyword>
<keyword id="KW-0547">Nucleotide-binding</keyword>
<keyword id="KW-0677">Repeat</keyword>
<keyword id="KW-0742">SOS response</keyword>
<keyword id="KW-0862">Zinc</keyword>
<keyword id="KW-0863">Zinc-finger</keyword>
<accession>Q7MHB5</accession>
<comment type="function">
    <text evidence="1">The UvrABC repair system catalyzes the recognition and processing of DNA lesions. UvrA is an ATPase and a DNA-binding protein. A damage recognition complex composed of 2 UvrA and 2 UvrB subunits scans DNA for abnormalities. When the presence of a lesion has been verified by UvrB, the UvrA molecules dissociate.</text>
</comment>
<comment type="subunit">
    <text evidence="1">Forms a heterotetramer with UvrB during the search for lesions.</text>
</comment>
<comment type="subcellular location">
    <subcellularLocation>
        <location evidence="1">Cytoplasm</location>
    </subcellularLocation>
</comment>
<comment type="similarity">
    <text evidence="1">Belongs to the ABC transporter superfamily. UvrA family.</text>
</comment>
<comment type="sequence caution" evidence="2">
    <conflict type="erroneous initiation">
        <sequence resource="EMBL-CDS" id="BAC95720"/>
    </conflict>
</comment>
<organism>
    <name type="scientific">Vibrio vulnificus (strain YJ016)</name>
    <dbReference type="NCBI Taxonomy" id="196600"/>
    <lineage>
        <taxon>Bacteria</taxon>
        <taxon>Pseudomonadati</taxon>
        <taxon>Pseudomonadota</taxon>
        <taxon>Gammaproteobacteria</taxon>
        <taxon>Vibrionales</taxon>
        <taxon>Vibrionaceae</taxon>
        <taxon>Vibrio</taxon>
    </lineage>
</organism>
<evidence type="ECO:0000255" key="1">
    <source>
        <dbReference type="HAMAP-Rule" id="MF_00205"/>
    </source>
</evidence>
<evidence type="ECO:0000305" key="2"/>
<protein>
    <recommendedName>
        <fullName evidence="1">UvrABC system protein A</fullName>
        <shortName evidence="1">UvrA protein</shortName>
    </recommendedName>
    <alternativeName>
        <fullName evidence="1">Excinuclease ABC subunit A</fullName>
    </alternativeName>
</protein>
<sequence length="940" mass="103994">MDKIEVRGARTHNLKNINLTIPRDKLIVITGLSGSGKSSLAFDTLYAEGQRRYVESLSAYARQFLSLMEKPDVDHIEGLSPAISIEQKSTSHNPRSTVGTITEVYDYLRLLYARVGEPRCPDHKVPLAAQTISQMVDKVLELPEGAKMMLLAPIVKERKGEHVKTLENLAAQGFIRARIDGETCDLTDPPTLELHKKHTIEVVVDRFKVRGDLQQRLAESFETALELSGGIAVIAPMEGDGEEIVFSANFACPHCGYSMQELEPRLFSFNNPAGACGTCDGLGVQQYFDPERVIQDANLSLAQGAIRGWDQKNYYYFQMLTSLAEHYDFDLHAPFNSLSKRIQEVILKGSGRTEIEFKYINDRGDIRLKRHPFEGILNTLERRYRDTESNSVREELVKYISTKPCTSCGGTRLRLEARNVFINDTTLPQIVELSIADALTFFATLKLEGQRAQIAEKVMKEINDRLQFLVNVGLNYLNLSRSAETLSGGEAQRIRLASQIGAGLVGVMYVLDEPSIGLHQRDNERLLKTLTHLRDLGNTVLVVEHDEDAIRCADHVIDIGPGAGVHGGQVVAEGTMAEILANPDSLTGQYLSGAKQIIVPTQRTPRDKNKTVELIGASGNNLKEVNLSVPVGLFSCITGVSGSGKSTLINDTFFKIAHTQLNGATTAQPAPYKSIKGLEHFDKVIDIDQSPIGRTPRSNPATYTGIFTPIRELFSGTQESRSRGYKPGRFSFNVRGGRCEACQGDGVIKVEMHFLPDVYVPCDVCKGKRYNRETLEVHYKGKSIDEVLEMTVEDAHEFFAPVPVIARKLQTLMDVGLSYIRLGQAATTLSGGEAQRVKLARELSKRDTGKTLYILDEPTTGLHFHDIQQLLTVLHRLRDHGNTVVVIEHNLDVIKTADWIIDLGPEGGQGGGEIIAQGTPEDVAQIEGSHTARFLKPMLK</sequence>
<gene>
    <name evidence="1" type="primary">uvrA</name>
    <name type="ordered locus">VV2956</name>
</gene>
<feature type="chain" id="PRO_0000093114" description="UvrABC system protein A">
    <location>
        <begin position="1"/>
        <end position="940"/>
    </location>
</feature>
<feature type="domain" description="ABC transporter 1" evidence="1">
    <location>
        <begin position="309"/>
        <end position="586"/>
    </location>
</feature>
<feature type="domain" description="ABC transporter 2" evidence="1">
    <location>
        <begin position="606"/>
        <end position="936"/>
    </location>
</feature>
<feature type="zinc finger region" description="C4-type" evidence="1">
    <location>
        <begin position="252"/>
        <end position="279"/>
    </location>
</feature>
<feature type="zinc finger region" description="C4-type" evidence="1">
    <location>
        <begin position="739"/>
        <end position="765"/>
    </location>
</feature>
<feature type="binding site" evidence="1">
    <location>
        <begin position="31"/>
        <end position="38"/>
    </location>
    <ligand>
        <name>ATP</name>
        <dbReference type="ChEBI" id="CHEBI:30616"/>
    </ligand>
</feature>
<feature type="binding site" evidence="1">
    <location>
        <begin position="639"/>
        <end position="646"/>
    </location>
    <ligand>
        <name>ATP</name>
        <dbReference type="ChEBI" id="CHEBI:30616"/>
    </ligand>
</feature>
<proteinExistence type="inferred from homology"/>
<reference key="1">
    <citation type="journal article" date="2003" name="Genome Res.">
        <title>Comparative genome analysis of Vibrio vulnificus, a marine pathogen.</title>
        <authorList>
            <person name="Chen C.-Y."/>
            <person name="Wu K.-M."/>
            <person name="Chang Y.-C."/>
            <person name="Chang C.-H."/>
            <person name="Tsai H.-C."/>
            <person name="Liao T.-L."/>
            <person name="Liu Y.-M."/>
            <person name="Chen H.-J."/>
            <person name="Shen A.B.-T."/>
            <person name="Li J.-C."/>
            <person name="Su T.-L."/>
            <person name="Shao C.-P."/>
            <person name="Lee C.-T."/>
            <person name="Hor L.-I."/>
            <person name="Tsai S.-F."/>
        </authorList>
    </citation>
    <scope>NUCLEOTIDE SEQUENCE [LARGE SCALE GENOMIC DNA]</scope>
    <source>
        <strain>YJ016</strain>
    </source>
</reference>